<evidence type="ECO:0000255" key="1">
    <source>
        <dbReference type="HAMAP-Rule" id="MF_01633"/>
    </source>
</evidence>
<sequence length="223" mass="24891">MNKSDALVVFSGGQDSTTCLFWAKKHFRKVYALSFIYGQKHVKEVELARVIAGKAGVEFKAMDVSFIGNLGKNSLTDTTITMDEVKPADSFPNTFVPGRNLFFLSIAAVYARELGINHIVTGVSQTDFSGYPDCRDAFIKSLNVTLNLAMDEQFVLHTPLMWIDKAETWALADELGVLDLIRHETLTCYNGVQGDGCGHCPACKLRREGLEKYLEIKAEREKR</sequence>
<accession>A6L2J2</accession>
<keyword id="KW-0067">ATP-binding</keyword>
<keyword id="KW-0436">Ligase</keyword>
<keyword id="KW-0479">Metal-binding</keyword>
<keyword id="KW-0547">Nucleotide-binding</keyword>
<keyword id="KW-0671">Queuosine biosynthesis</keyword>
<keyword id="KW-0862">Zinc</keyword>
<comment type="function">
    <text evidence="1">Catalyzes the ATP-dependent conversion of 7-carboxy-7-deazaguanine (CDG) to 7-cyano-7-deazaguanine (preQ(0)).</text>
</comment>
<comment type="catalytic activity">
    <reaction evidence="1">
        <text>7-carboxy-7-deazaguanine + NH4(+) + ATP = 7-cyano-7-deazaguanine + ADP + phosphate + H2O + H(+)</text>
        <dbReference type="Rhea" id="RHEA:27982"/>
        <dbReference type="ChEBI" id="CHEBI:15377"/>
        <dbReference type="ChEBI" id="CHEBI:15378"/>
        <dbReference type="ChEBI" id="CHEBI:28938"/>
        <dbReference type="ChEBI" id="CHEBI:30616"/>
        <dbReference type="ChEBI" id="CHEBI:43474"/>
        <dbReference type="ChEBI" id="CHEBI:45075"/>
        <dbReference type="ChEBI" id="CHEBI:61036"/>
        <dbReference type="ChEBI" id="CHEBI:456216"/>
        <dbReference type="EC" id="6.3.4.20"/>
    </reaction>
</comment>
<comment type="cofactor">
    <cofactor evidence="1">
        <name>Zn(2+)</name>
        <dbReference type="ChEBI" id="CHEBI:29105"/>
    </cofactor>
    <text evidence="1">Binds 1 zinc ion per subunit.</text>
</comment>
<comment type="pathway">
    <text evidence="1">Purine metabolism; 7-cyano-7-deazaguanine biosynthesis.</text>
</comment>
<comment type="similarity">
    <text evidence="1">Belongs to the QueC family.</text>
</comment>
<organism>
    <name type="scientific">Phocaeicola vulgatus (strain ATCC 8482 / DSM 1447 / JCM 5826 / CCUG 4940 / NBRC 14291 / NCTC 11154)</name>
    <name type="common">Bacteroides vulgatus</name>
    <dbReference type="NCBI Taxonomy" id="435590"/>
    <lineage>
        <taxon>Bacteria</taxon>
        <taxon>Pseudomonadati</taxon>
        <taxon>Bacteroidota</taxon>
        <taxon>Bacteroidia</taxon>
        <taxon>Bacteroidales</taxon>
        <taxon>Bacteroidaceae</taxon>
        <taxon>Phocaeicola</taxon>
    </lineage>
</organism>
<protein>
    <recommendedName>
        <fullName evidence="1">7-cyano-7-deazaguanine synthase</fullName>
        <ecNumber evidence="1">6.3.4.20</ecNumber>
    </recommendedName>
    <alternativeName>
        <fullName evidence="1">7-cyano-7-carbaguanine synthase</fullName>
    </alternativeName>
    <alternativeName>
        <fullName evidence="1">PreQ(0) synthase</fullName>
    </alternativeName>
    <alternativeName>
        <fullName evidence="1">Queuosine biosynthesis protein QueC</fullName>
    </alternativeName>
</protein>
<feature type="chain" id="PRO_0000336896" description="7-cyano-7-deazaguanine synthase">
    <location>
        <begin position="1"/>
        <end position="223"/>
    </location>
</feature>
<feature type="binding site" evidence="1">
    <location>
        <begin position="10"/>
        <end position="20"/>
    </location>
    <ligand>
        <name>ATP</name>
        <dbReference type="ChEBI" id="CHEBI:30616"/>
    </ligand>
</feature>
<feature type="binding site" evidence="1">
    <location>
        <position position="188"/>
    </location>
    <ligand>
        <name>Zn(2+)</name>
        <dbReference type="ChEBI" id="CHEBI:29105"/>
    </ligand>
</feature>
<feature type="binding site" evidence="1">
    <location>
        <position position="197"/>
    </location>
    <ligand>
        <name>Zn(2+)</name>
        <dbReference type="ChEBI" id="CHEBI:29105"/>
    </ligand>
</feature>
<feature type="binding site" evidence="1">
    <location>
        <position position="200"/>
    </location>
    <ligand>
        <name>Zn(2+)</name>
        <dbReference type="ChEBI" id="CHEBI:29105"/>
    </ligand>
</feature>
<feature type="binding site" evidence="1">
    <location>
        <position position="203"/>
    </location>
    <ligand>
        <name>Zn(2+)</name>
        <dbReference type="ChEBI" id="CHEBI:29105"/>
    </ligand>
</feature>
<gene>
    <name evidence="1" type="primary">queC</name>
    <name type="ordered locus">BVU_2246</name>
</gene>
<reference key="1">
    <citation type="journal article" date="2007" name="PLoS Biol.">
        <title>Evolution of symbiotic bacteria in the distal human intestine.</title>
        <authorList>
            <person name="Xu J."/>
            <person name="Mahowald M.A."/>
            <person name="Ley R.E."/>
            <person name="Lozupone C.A."/>
            <person name="Hamady M."/>
            <person name="Martens E.C."/>
            <person name="Henrissat B."/>
            <person name="Coutinho P.M."/>
            <person name="Minx P."/>
            <person name="Latreille P."/>
            <person name="Cordum H."/>
            <person name="Van Brunt A."/>
            <person name="Kim K."/>
            <person name="Fulton R.S."/>
            <person name="Fulton L.A."/>
            <person name="Clifton S.W."/>
            <person name="Wilson R.K."/>
            <person name="Knight R.D."/>
            <person name="Gordon J.I."/>
        </authorList>
    </citation>
    <scope>NUCLEOTIDE SEQUENCE [LARGE SCALE GENOMIC DNA]</scope>
    <source>
        <strain>ATCC 8482 / DSM 1447 / JCM 5826 / CCUG 4940 / NBRC 14291 / NCTC 11154</strain>
    </source>
</reference>
<proteinExistence type="inferred from homology"/>
<name>QUEC_PHOV8</name>
<dbReference type="EC" id="6.3.4.20" evidence="1"/>
<dbReference type="EMBL" id="CP000139">
    <property type="protein sequence ID" value="ABR39906.1"/>
    <property type="molecule type" value="Genomic_DNA"/>
</dbReference>
<dbReference type="RefSeq" id="WP_011965534.1">
    <property type="nucleotide sequence ID" value="NZ_CAXVNH010000011.1"/>
</dbReference>
<dbReference type="SMR" id="A6L2J2"/>
<dbReference type="STRING" id="435590.BVU_2246"/>
<dbReference type="PaxDb" id="435590-BVU_2246"/>
<dbReference type="GeneID" id="5303210"/>
<dbReference type="KEGG" id="bvu:BVU_2246"/>
<dbReference type="eggNOG" id="COG0603">
    <property type="taxonomic scope" value="Bacteria"/>
</dbReference>
<dbReference type="HOGENOM" id="CLU_081854_0_0_10"/>
<dbReference type="BioCyc" id="BVUL435590:G1G59-2337-MONOMER"/>
<dbReference type="UniPathway" id="UPA00391"/>
<dbReference type="Proteomes" id="UP000002861">
    <property type="component" value="Chromosome"/>
</dbReference>
<dbReference type="GO" id="GO:0005524">
    <property type="term" value="F:ATP binding"/>
    <property type="evidence" value="ECO:0007669"/>
    <property type="project" value="UniProtKB-UniRule"/>
</dbReference>
<dbReference type="GO" id="GO:0016879">
    <property type="term" value="F:ligase activity, forming carbon-nitrogen bonds"/>
    <property type="evidence" value="ECO:0007669"/>
    <property type="project" value="UniProtKB-UniRule"/>
</dbReference>
<dbReference type="GO" id="GO:0008270">
    <property type="term" value="F:zinc ion binding"/>
    <property type="evidence" value="ECO:0007669"/>
    <property type="project" value="UniProtKB-UniRule"/>
</dbReference>
<dbReference type="GO" id="GO:0008616">
    <property type="term" value="P:queuosine biosynthetic process"/>
    <property type="evidence" value="ECO:0007669"/>
    <property type="project" value="UniProtKB-UniRule"/>
</dbReference>
<dbReference type="CDD" id="cd01995">
    <property type="entry name" value="QueC-like"/>
    <property type="match status" value="1"/>
</dbReference>
<dbReference type="FunFam" id="3.40.50.620:FF:000017">
    <property type="entry name" value="7-cyano-7-deazaguanine synthase"/>
    <property type="match status" value="1"/>
</dbReference>
<dbReference type="Gene3D" id="3.40.50.620">
    <property type="entry name" value="HUPs"/>
    <property type="match status" value="1"/>
</dbReference>
<dbReference type="HAMAP" id="MF_01633">
    <property type="entry name" value="QueC"/>
    <property type="match status" value="1"/>
</dbReference>
<dbReference type="InterPro" id="IPR018317">
    <property type="entry name" value="QueC"/>
</dbReference>
<dbReference type="InterPro" id="IPR014729">
    <property type="entry name" value="Rossmann-like_a/b/a_fold"/>
</dbReference>
<dbReference type="NCBIfam" id="TIGR00364">
    <property type="entry name" value="7-cyano-7-deazaguanine synthase QueC"/>
    <property type="match status" value="1"/>
</dbReference>
<dbReference type="PANTHER" id="PTHR42914">
    <property type="entry name" value="7-CYANO-7-DEAZAGUANINE SYNTHASE"/>
    <property type="match status" value="1"/>
</dbReference>
<dbReference type="PANTHER" id="PTHR42914:SF1">
    <property type="entry name" value="7-CYANO-7-DEAZAGUANINE SYNTHASE"/>
    <property type="match status" value="1"/>
</dbReference>
<dbReference type="Pfam" id="PF06508">
    <property type="entry name" value="QueC"/>
    <property type="match status" value="1"/>
</dbReference>
<dbReference type="PIRSF" id="PIRSF006293">
    <property type="entry name" value="ExsB"/>
    <property type="match status" value="1"/>
</dbReference>
<dbReference type="SUPFAM" id="SSF52402">
    <property type="entry name" value="Adenine nucleotide alpha hydrolases-like"/>
    <property type="match status" value="1"/>
</dbReference>